<gene>
    <name type="primary">mrcA</name>
    <name type="synonym">ponA</name>
    <name type="ordered locus">HI_0440</name>
</gene>
<dbReference type="EC" id="2.4.99.28" evidence="2"/>
<dbReference type="EC" id="3.4.16.4" evidence="2"/>
<dbReference type="EMBL" id="M62809">
    <property type="protein sequence ID" value="AAA25007.1"/>
    <property type="molecule type" value="Genomic_DNA"/>
</dbReference>
<dbReference type="EMBL" id="L42023">
    <property type="protein sequence ID" value="AAC22099.1"/>
    <property type="molecule type" value="Genomic_DNA"/>
</dbReference>
<dbReference type="PIR" id="D64068">
    <property type="entry name" value="JH0438"/>
</dbReference>
<dbReference type="RefSeq" id="NP_438601.1">
    <property type="nucleotide sequence ID" value="NC_000907.1"/>
</dbReference>
<dbReference type="PDB" id="5U2G">
    <property type="method" value="X-ray"/>
    <property type="resolution" value="2.61 A"/>
    <property type="chains" value="A/B=32-853"/>
</dbReference>
<dbReference type="PDBsum" id="5U2G"/>
<dbReference type="SMR" id="P31776"/>
<dbReference type="STRING" id="71421.HI_0440"/>
<dbReference type="CAZy" id="GT51">
    <property type="family name" value="Glycosyltransferase Family 51"/>
</dbReference>
<dbReference type="EnsemblBacteria" id="AAC22099">
    <property type="protein sequence ID" value="AAC22099"/>
    <property type="gene ID" value="HI_0440"/>
</dbReference>
<dbReference type="KEGG" id="hin:HI_0440"/>
<dbReference type="PATRIC" id="fig|71421.8.peg.460"/>
<dbReference type="eggNOG" id="COG5009">
    <property type="taxonomic scope" value="Bacteria"/>
</dbReference>
<dbReference type="HOGENOM" id="CLU_006354_2_4_6"/>
<dbReference type="OrthoDB" id="9766909at2"/>
<dbReference type="PhylomeDB" id="P31776"/>
<dbReference type="UniPathway" id="UPA00219"/>
<dbReference type="Proteomes" id="UP000000579">
    <property type="component" value="Chromosome"/>
</dbReference>
<dbReference type="GO" id="GO:0030288">
    <property type="term" value="C:outer membrane-bounded periplasmic space"/>
    <property type="evidence" value="ECO:0000318"/>
    <property type="project" value="GO_Central"/>
</dbReference>
<dbReference type="GO" id="GO:0005886">
    <property type="term" value="C:plasma membrane"/>
    <property type="evidence" value="ECO:0007669"/>
    <property type="project" value="UniProtKB-SubCell"/>
</dbReference>
<dbReference type="GO" id="GO:0008658">
    <property type="term" value="F:penicillin binding"/>
    <property type="evidence" value="ECO:0007669"/>
    <property type="project" value="InterPro"/>
</dbReference>
<dbReference type="GO" id="GO:0008955">
    <property type="term" value="F:peptidoglycan glycosyltransferase activity"/>
    <property type="evidence" value="ECO:0000318"/>
    <property type="project" value="GO_Central"/>
</dbReference>
<dbReference type="GO" id="GO:0009002">
    <property type="term" value="F:serine-type D-Ala-D-Ala carboxypeptidase activity"/>
    <property type="evidence" value="ECO:0007669"/>
    <property type="project" value="UniProtKB-EC"/>
</dbReference>
<dbReference type="GO" id="GO:0071555">
    <property type="term" value="P:cell wall organization"/>
    <property type="evidence" value="ECO:0007669"/>
    <property type="project" value="UniProtKB-KW"/>
</dbReference>
<dbReference type="GO" id="GO:0009252">
    <property type="term" value="P:peptidoglycan biosynthetic process"/>
    <property type="evidence" value="ECO:0000318"/>
    <property type="project" value="GO_Central"/>
</dbReference>
<dbReference type="GO" id="GO:0006508">
    <property type="term" value="P:proteolysis"/>
    <property type="evidence" value="ECO:0007669"/>
    <property type="project" value="UniProtKB-KW"/>
</dbReference>
<dbReference type="GO" id="GO:0008360">
    <property type="term" value="P:regulation of cell shape"/>
    <property type="evidence" value="ECO:0007669"/>
    <property type="project" value="UniProtKB-KW"/>
</dbReference>
<dbReference type="GO" id="GO:0046677">
    <property type="term" value="P:response to antibiotic"/>
    <property type="evidence" value="ECO:0007669"/>
    <property type="project" value="UniProtKB-KW"/>
</dbReference>
<dbReference type="FunFam" id="1.10.3810.10:FF:000003">
    <property type="entry name" value="Penicillin-binding protein 1a"/>
    <property type="match status" value="1"/>
</dbReference>
<dbReference type="FunFam" id="3.40.710.10:FF:000157">
    <property type="entry name" value="Penicillin-binding protein, 1A family"/>
    <property type="match status" value="1"/>
</dbReference>
<dbReference type="Gene3D" id="1.10.3810.10">
    <property type="entry name" value="Biosynthetic peptidoglycan transglycosylase-like"/>
    <property type="match status" value="1"/>
</dbReference>
<dbReference type="Gene3D" id="3.40.710.10">
    <property type="entry name" value="DD-peptidase/beta-lactamase superfamily"/>
    <property type="match status" value="3"/>
</dbReference>
<dbReference type="InterPro" id="IPR012338">
    <property type="entry name" value="Beta-lactam/transpept-like"/>
</dbReference>
<dbReference type="InterPro" id="IPR001264">
    <property type="entry name" value="Glyco_trans_51"/>
</dbReference>
<dbReference type="InterPro" id="IPR050396">
    <property type="entry name" value="Glycosyltr_51/Transpeptidase"/>
</dbReference>
<dbReference type="InterPro" id="IPR023346">
    <property type="entry name" value="Lysozyme-like_dom_sf"/>
</dbReference>
<dbReference type="InterPro" id="IPR036950">
    <property type="entry name" value="PBP_transglycosylase"/>
</dbReference>
<dbReference type="InterPro" id="IPR031376">
    <property type="entry name" value="PCB_OB"/>
</dbReference>
<dbReference type="InterPro" id="IPR001460">
    <property type="entry name" value="PCN-bd_Tpept"/>
</dbReference>
<dbReference type="PANTHER" id="PTHR32282">
    <property type="entry name" value="BINDING PROTEIN TRANSPEPTIDASE, PUTATIVE-RELATED"/>
    <property type="match status" value="1"/>
</dbReference>
<dbReference type="PANTHER" id="PTHR32282:SF27">
    <property type="entry name" value="PENICILLIN-BINDING PROTEIN 1A"/>
    <property type="match status" value="1"/>
</dbReference>
<dbReference type="Pfam" id="PF17092">
    <property type="entry name" value="PCB_OB"/>
    <property type="match status" value="1"/>
</dbReference>
<dbReference type="Pfam" id="PF00912">
    <property type="entry name" value="Transgly"/>
    <property type="match status" value="1"/>
</dbReference>
<dbReference type="Pfam" id="PF00905">
    <property type="entry name" value="Transpeptidase"/>
    <property type="match status" value="1"/>
</dbReference>
<dbReference type="SUPFAM" id="SSF56601">
    <property type="entry name" value="beta-lactamase/transpeptidase-like"/>
    <property type="match status" value="1"/>
</dbReference>
<dbReference type="SUPFAM" id="SSF53955">
    <property type="entry name" value="Lysozyme-like"/>
    <property type="match status" value="1"/>
</dbReference>
<organism>
    <name type="scientific">Haemophilus influenzae (strain ATCC 51907 / DSM 11121 / KW20 / Rd)</name>
    <dbReference type="NCBI Taxonomy" id="71421"/>
    <lineage>
        <taxon>Bacteria</taxon>
        <taxon>Pseudomonadati</taxon>
        <taxon>Pseudomonadota</taxon>
        <taxon>Gammaproteobacteria</taxon>
        <taxon>Pasteurellales</taxon>
        <taxon>Pasteurellaceae</taxon>
        <taxon>Haemophilus</taxon>
    </lineage>
</organism>
<comment type="function">
    <text evidence="1">Cell wall formation. Synthesis of cross-linked peptidoglycan from the lipid intermediates. The enzyme has a penicillin-insensitive transglycosylase N-terminal domain (formation of linear glycan strands) and a penicillin-sensitive transpeptidase C-terminal domain (cross-linking of the peptide subunits).</text>
</comment>
<comment type="catalytic activity">
    <reaction evidence="2">
        <text>[GlcNAc-(1-&gt;4)-Mur2Ac(oyl-L-Ala-gamma-D-Glu-L-Lys-D-Ala-D-Ala)](n)-di-trans,octa-cis-undecaprenyl diphosphate + beta-D-GlcNAc-(1-&gt;4)-Mur2Ac(oyl-L-Ala-gamma-D-Glu-L-Lys-D-Ala-D-Ala)-di-trans,octa-cis-undecaprenyl diphosphate = [GlcNAc-(1-&gt;4)-Mur2Ac(oyl-L-Ala-gamma-D-Glu-L-Lys-D-Ala-D-Ala)](n+1)-di-trans,octa-cis-undecaprenyl diphosphate + di-trans,octa-cis-undecaprenyl diphosphate + H(+)</text>
        <dbReference type="Rhea" id="RHEA:23708"/>
        <dbReference type="Rhea" id="RHEA-COMP:9602"/>
        <dbReference type="Rhea" id="RHEA-COMP:9603"/>
        <dbReference type="ChEBI" id="CHEBI:15378"/>
        <dbReference type="ChEBI" id="CHEBI:58405"/>
        <dbReference type="ChEBI" id="CHEBI:60033"/>
        <dbReference type="ChEBI" id="CHEBI:78435"/>
        <dbReference type="EC" id="2.4.99.28"/>
    </reaction>
</comment>
<comment type="catalytic activity">
    <reaction evidence="2">
        <text>Preferential cleavage: (Ac)2-L-Lys-D-Ala-|-D-Ala. Also transpeptidation of peptidyl-alanyl moieties that are N-acyl substituents of D-alanine.</text>
        <dbReference type="EC" id="3.4.16.4"/>
    </reaction>
</comment>
<comment type="pathway">
    <text>Cell wall biogenesis; peptidoglycan biosynthesis.</text>
</comment>
<comment type="subcellular location">
    <subcellularLocation>
        <location evidence="1">Cell inner membrane</location>
        <topology evidence="1">Single-pass type II membrane protein</topology>
    </subcellularLocation>
</comment>
<comment type="similarity">
    <text evidence="6">In the N-terminal section; belongs to the glycosyltransferase 51 family.</text>
</comment>
<comment type="similarity">
    <text evidence="6">In the C-terminal section; belongs to the transpeptidase family.</text>
</comment>
<protein>
    <recommendedName>
        <fullName>Penicillin-binding protein 1A</fullName>
        <shortName>PBP-1a</shortName>
        <shortName>PBP1a</shortName>
    </recommendedName>
    <alternativeName>
        <fullName>Penicillin-binding protein A</fullName>
    </alternativeName>
    <domain>
        <recommendedName>
            <fullName>Penicillin-insensitive transglycosylase</fullName>
            <ecNumber evidence="2">2.4.99.28</ecNumber>
        </recommendedName>
        <alternativeName>
            <fullName>Peptidoglycan TGase</fullName>
        </alternativeName>
    </domain>
    <domain>
        <recommendedName>
            <fullName>Penicillin-sensitive transpeptidase</fullName>
            <ecNumber evidence="2">3.4.16.4</ecNumber>
        </recommendedName>
        <alternativeName>
            <fullName>DD-transpeptidase</fullName>
        </alternativeName>
    </domain>
</protein>
<keyword id="KW-0002">3D-structure</keyword>
<keyword id="KW-0046">Antibiotic resistance</keyword>
<keyword id="KW-0121">Carboxypeptidase</keyword>
<keyword id="KW-0997">Cell inner membrane</keyword>
<keyword id="KW-1003">Cell membrane</keyword>
<keyword id="KW-0133">Cell shape</keyword>
<keyword id="KW-0961">Cell wall biogenesis/degradation</keyword>
<keyword id="KW-0328">Glycosyltransferase</keyword>
<keyword id="KW-0378">Hydrolase</keyword>
<keyword id="KW-0472">Membrane</keyword>
<keyword id="KW-0511">Multifunctional enzyme</keyword>
<keyword id="KW-0573">Peptidoglycan synthesis</keyword>
<keyword id="KW-0645">Protease</keyword>
<keyword id="KW-1185">Reference proteome</keyword>
<keyword id="KW-0735">Signal-anchor</keyword>
<keyword id="KW-0808">Transferase</keyword>
<keyword id="KW-0812">Transmembrane</keyword>
<keyword id="KW-1133">Transmembrane helix</keyword>
<sequence length="853" mass="94221">MRIAKLILNTLLTLCILGLVAGGMLYFHLKSELQQPMQIYTADGKLIGEVGEQRRIPVKLADVPQRLIDAFLATEDSRFYDHHGLDPIGIARALFVAVSNGGASQGASTITQQLARNFFLTSEKTIIRKAREAVLAVEIENTLNKQEILELYLNKIFLGYRSYGVAAAAQTYFGKSLNELTLSEMAIIAGLPKAPSTMNPLYSLKRSEERRNVVLSRMLDEKYISKEEYDAALKEPIVASYHGAKFEFRADYVTEMVRQEMVRRFGEENAYTSGYKVFTTVLSKDQAEAQKAVRNNLIDYDMRHGYRGGAPLWQKNEAAWDNDRIVGFLRKLPDSEPFIPAAVIGIVKGGADILLASGEKMTLSTNAMRWTGRSNPVKVGEQIWIHQRANGEWQLGQIPAANSALVSLNSDNGAIEAVVGGFSYEQSKFNRATQSLVQVGSSIKPFIYAAALEKGLTLSSVLQDSPISIQKPGQKMWQPKNSPDRYDGPMRLRVGLGQSKNIIAIRAIQTAGIDFTAEFLQRFGFKRDQYFASEALALGAASFTPLEMARAYAVFDNGGFLIEPYIIEKIQDNTGKDLFIANPKIACIECNDIPVIYGETKDKINGFANIPLGENALKPTDDSTNGEELDQQPETVPELPELQSNMTALKEDAIDLMAAAKNASSKIEYAPRVISGELAFLIRSALNTAIYGEQGLDWKGTSWRIAQSIKRSDIGGKTGTTNSSKVAWYAGFGANLVTTTYVGFDDNKRVLGRGEAGAKTAMPAWITYMKTALSDKPERKLSLPPKIVEKNIDTLTGLLSPNGGRKEYFIAGTEPTRTYLSEMQERGYYVPTELQQRLNNEGNTPATQPQELF</sequence>
<accession>P31776</accession>
<proteinExistence type="evidence at protein level"/>
<reference key="1">
    <citation type="journal article" date="1991" name="Gene">
        <title>Nucleotide sequence of a cluster of genes involved in the transformation of Haemophilus influenzae Rd.</title>
        <authorList>
            <person name="Tomb J.-F."/>
            <person name="El-Hajj H."/>
            <person name="Smith H.O."/>
        </authorList>
    </citation>
    <scope>NUCLEOTIDE SEQUENCE [GENOMIC DNA]</scope>
    <source>
        <strain>ATCC 51907 / DSM 11121 / KW20 / Rd</strain>
    </source>
</reference>
<reference key="2">
    <citation type="journal article" date="1995" name="Science">
        <title>Whole-genome random sequencing and assembly of Haemophilus influenzae Rd.</title>
        <authorList>
            <person name="Fleischmann R.D."/>
            <person name="Adams M.D."/>
            <person name="White O."/>
            <person name="Clayton R.A."/>
            <person name="Kirkness E.F."/>
            <person name="Kerlavage A.R."/>
            <person name="Bult C.J."/>
            <person name="Tomb J.-F."/>
            <person name="Dougherty B.A."/>
            <person name="Merrick J.M."/>
            <person name="McKenney K."/>
            <person name="Sutton G.G."/>
            <person name="FitzHugh W."/>
            <person name="Fields C.A."/>
            <person name="Gocayne J.D."/>
            <person name="Scott J.D."/>
            <person name="Shirley R."/>
            <person name="Liu L.-I."/>
            <person name="Glodek A."/>
            <person name="Kelley J.M."/>
            <person name="Weidman J.F."/>
            <person name="Phillips C.A."/>
            <person name="Spriggs T."/>
            <person name="Hedblom E."/>
            <person name="Cotton M.D."/>
            <person name="Utterback T.R."/>
            <person name="Hanna M.C."/>
            <person name="Nguyen D.T."/>
            <person name="Saudek D.M."/>
            <person name="Brandon R.C."/>
            <person name="Fine L.D."/>
            <person name="Fritchman J.L."/>
            <person name="Fuhrmann J.L."/>
            <person name="Geoghagen N.S.M."/>
            <person name="Gnehm C.L."/>
            <person name="McDonald L.A."/>
            <person name="Small K.V."/>
            <person name="Fraser C.M."/>
            <person name="Smith H.O."/>
            <person name="Venter J.C."/>
        </authorList>
    </citation>
    <scope>NUCLEOTIDE SEQUENCE [LARGE SCALE GENOMIC DNA]</scope>
    <source>
        <strain>ATCC 51907 / DSM 11121 / KW20 / Rd</strain>
    </source>
</reference>
<reference key="3">
    <citation type="journal article" date="1995" name="J. Bacteriol.">
        <title>Expression and characterization of the ponA (ORF I) gene of Haemophilus influenzae: functional complementation in a heterologous system.</title>
        <authorList>
            <person name="Sharma U.K."/>
            <person name="Dwarakanath P."/>
            <person name="Banerjee N."/>
            <person name="Town C."/>
            <person name="Balganesh T.S."/>
        </authorList>
    </citation>
    <scope>CHARACTERIZATION</scope>
    <source>
        <strain>ATCC 51907 / DSM 11121 / KW20 / Rd</strain>
    </source>
</reference>
<reference key="4">
    <citation type="journal article" date="2000" name="Electrophoresis">
        <title>Two-dimensional map of the proteome of Haemophilus influenzae.</title>
        <authorList>
            <person name="Langen H."/>
            <person name="Takacs B."/>
            <person name="Evers S."/>
            <person name="Berndt P."/>
            <person name="Lahm H.W."/>
            <person name="Wipf B."/>
            <person name="Gray C."/>
            <person name="Fountoulakis M."/>
        </authorList>
    </citation>
    <scope>IDENTIFICATION BY MASS SPECTROMETRY</scope>
    <source>
        <strain>ATCC 51907 / DSM 11121 / KW20 / Rd</strain>
    </source>
</reference>
<name>PBPA_HAEIN</name>
<feature type="chain" id="PRO_0000083165" description="Penicillin-binding protein 1A">
    <location>
        <begin position="1"/>
        <end position="853"/>
    </location>
</feature>
<feature type="topological domain" description="Cytoplasmic" evidence="4">
    <location>
        <begin position="1"/>
        <end position="6"/>
    </location>
</feature>
<feature type="transmembrane region" description="Helical; Signal-anchor for type II membrane protein" evidence="4">
    <location>
        <begin position="7"/>
        <end position="27"/>
    </location>
</feature>
<feature type="topological domain" description="Periplasmic" evidence="4">
    <location>
        <begin position="28"/>
        <end position="853"/>
    </location>
</feature>
<feature type="region of interest" description="Transglycosylase">
    <location>
        <begin position="37"/>
        <end position="205"/>
    </location>
</feature>
<feature type="region of interest" description="Transpeptidase">
    <location>
        <begin position="387"/>
        <end position="681"/>
    </location>
</feature>
<feature type="region of interest" description="Disordered" evidence="5">
    <location>
        <begin position="615"/>
        <end position="636"/>
    </location>
</feature>
<feature type="active site" description="Proton donor; for transglycosylase activity" evidence="3">
    <location>
        <position position="75"/>
    </location>
</feature>
<feature type="active site" description="Acyl-ester intermediate; for transpeptidase activity" evidence="3">
    <location>
        <position position="441"/>
    </location>
</feature>
<feature type="sequence conflict" description="In Ref. 1." evidence="6" ref="1">
    <original>L</original>
    <variation>LPSVETLKTVEL</variation>
    <location>
        <position position="33"/>
    </location>
</feature>
<feature type="strand" evidence="7">
    <location>
        <begin position="37"/>
        <end position="40"/>
    </location>
</feature>
<feature type="strand" evidence="7">
    <location>
        <begin position="46"/>
        <end position="50"/>
    </location>
</feature>
<feature type="helix" evidence="7">
    <location>
        <begin position="65"/>
        <end position="74"/>
    </location>
</feature>
<feature type="helix" evidence="7">
    <location>
        <begin position="146"/>
        <end position="155"/>
    </location>
</feature>
<feature type="strand" evidence="7">
    <location>
        <begin position="162"/>
        <end position="164"/>
    </location>
</feature>
<feature type="helix" evidence="7">
    <location>
        <begin position="165"/>
        <end position="171"/>
    </location>
</feature>
<feature type="helix" evidence="7">
    <location>
        <begin position="182"/>
        <end position="190"/>
    </location>
</feature>
<feature type="helix" evidence="7">
    <location>
        <begin position="191"/>
        <end position="193"/>
    </location>
</feature>
<feature type="turn" evidence="7">
    <location>
        <begin position="195"/>
        <end position="197"/>
    </location>
</feature>
<feature type="turn" evidence="7">
    <location>
        <begin position="200"/>
        <end position="202"/>
    </location>
</feature>
<feature type="helix" evidence="7">
    <location>
        <begin position="204"/>
        <end position="220"/>
    </location>
</feature>
<feature type="helix" evidence="7">
    <location>
        <begin position="226"/>
        <end position="233"/>
    </location>
</feature>
<feature type="helix" evidence="7">
    <location>
        <begin position="251"/>
        <end position="265"/>
    </location>
</feature>
<feature type="helix" evidence="7">
    <location>
        <begin position="267"/>
        <end position="272"/>
    </location>
</feature>
<feature type="strand" evidence="7">
    <location>
        <begin position="276"/>
        <end position="280"/>
    </location>
</feature>
<feature type="helix" evidence="7">
    <location>
        <begin position="283"/>
        <end position="302"/>
    </location>
</feature>
<feature type="strand" evidence="7">
    <location>
        <begin position="310"/>
        <end position="313"/>
    </location>
</feature>
<feature type="helix" evidence="7">
    <location>
        <begin position="322"/>
        <end position="331"/>
    </location>
</feature>
<feature type="strand" evidence="7">
    <location>
        <begin position="338"/>
        <end position="346"/>
    </location>
</feature>
<feature type="strand" evidence="7">
    <location>
        <begin position="348"/>
        <end position="358"/>
    </location>
</feature>
<feature type="strand" evidence="7">
    <location>
        <begin position="360"/>
        <end position="365"/>
    </location>
</feature>
<feature type="helix" evidence="7">
    <location>
        <begin position="366"/>
        <end position="371"/>
    </location>
</feature>
<feature type="strand" evidence="7">
    <location>
        <begin position="372"/>
        <end position="374"/>
    </location>
</feature>
<feature type="strand" evidence="7">
    <location>
        <begin position="381"/>
        <end position="387"/>
    </location>
</feature>
<feature type="strand" evidence="7">
    <location>
        <begin position="393"/>
        <end position="396"/>
    </location>
</feature>
<feature type="strand" evidence="7">
    <location>
        <begin position="400"/>
        <end position="409"/>
    </location>
</feature>
<feature type="turn" evidence="7">
    <location>
        <begin position="410"/>
        <end position="412"/>
    </location>
</feature>
<feature type="strand" evidence="7">
    <location>
        <begin position="414"/>
        <end position="419"/>
    </location>
</feature>
<feature type="turn" evidence="7">
    <location>
        <begin position="424"/>
        <end position="426"/>
    </location>
</feature>
<feature type="turn" evidence="7">
    <location>
        <begin position="431"/>
        <end position="433"/>
    </location>
</feature>
<feature type="helix" evidence="7">
    <location>
        <begin position="440"/>
        <end position="443"/>
    </location>
</feature>
<feature type="helix" evidence="7">
    <location>
        <begin position="444"/>
        <end position="454"/>
    </location>
</feature>
<feature type="strand" evidence="7">
    <location>
        <begin position="461"/>
        <end position="465"/>
    </location>
</feature>
<feature type="strand" evidence="7">
    <location>
        <begin position="482"/>
        <end position="484"/>
    </location>
</feature>
<feature type="strand" evidence="7">
    <location>
        <begin position="488"/>
        <end position="491"/>
    </location>
</feature>
<feature type="helix" evidence="7">
    <location>
        <begin position="492"/>
        <end position="497"/>
    </location>
</feature>
<feature type="helix" evidence="7">
    <location>
        <begin position="501"/>
        <end position="511"/>
    </location>
</feature>
<feature type="helix" evidence="7">
    <location>
        <begin position="513"/>
        <end position="520"/>
    </location>
</feature>
<feature type="helix" evidence="7">
    <location>
        <begin position="521"/>
        <end position="523"/>
    </location>
</feature>
<feature type="helix" evidence="7">
    <location>
        <begin position="527"/>
        <end position="529"/>
    </location>
</feature>
<feature type="helix" evidence="7">
    <location>
        <begin position="534"/>
        <end position="538"/>
    </location>
</feature>
<feature type="strand" evidence="7">
    <location>
        <begin position="541"/>
        <end position="543"/>
    </location>
</feature>
<feature type="helix" evidence="7">
    <location>
        <begin position="545"/>
        <end position="557"/>
    </location>
</feature>
<feature type="strand" evidence="7">
    <location>
        <begin position="567"/>
        <end position="571"/>
    </location>
</feature>
<feature type="strand" evidence="7">
    <location>
        <begin position="577"/>
        <end position="580"/>
    </location>
</feature>
<feature type="helix" evidence="7">
    <location>
        <begin position="676"/>
        <end position="691"/>
    </location>
</feature>
<feature type="helix" evidence="7">
    <location>
        <begin position="703"/>
        <end position="707"/>
    </location>
</feature>
<feature type="strand" evidence="7">
    <location>
        <begin position="712"/>
        <end position="720"/>
    </location>
</feature>
<feature type="strand" evidence="7">
    <location>
        <begin position="724"/>
        <end position="733"/>
    </location>
</feature>
<feature type="strand" evidence="7">
    <location>
        <begin position="736"/>
        <end position="743"/>
    </location>
</feature>
<feature type="helix" evidence="7">
    <location>
        <begin position="757"/>
        <end position="760"/>
    </location>
</feature>
<feature type="helix" evidence="7">
    <location>
        <begin position="762"/>
        <end position="773"/>
    </location>
</feature>
<feature type="strand" evidence="7">
    <location>
        <begin position="787"/>
        <end position="792"/>
    </location>
</feature>
<feature type="turn" evidence="7">
    <location>
        <begin position="794"/>
        <end position="796"/>
    </location>
</feature>
<feature type="strand" evidence="7">
    <location>
        <begin position="801"/>
        <end position="803"/>
    </location>
</feature>
<feature type="strand" evidence="7">
    <location>
        <begin position="805"/>
        <end position="810"/>
    </location>
</feature>
<feature type="turn" evidence="7">
    <location>
        <begin position="811"/>
        <end position="813"/>
    </location>
</feature>
<evidence type="ECO:0000250" key="1"/>
<evidence type="ECO:0000250" key="2">
    <source>
        <dbReference type="UniProtKB" id="P02918"/>
    </source>
</evidence>
<evidence type="ECO:0000250" key="3">
    <source>
        <dbReference type="UniProtKB" id="P02919"/>
    </source>
</evidence>
<evidence type="ECO:0000255" key="4"/>
<evidence type="ECO:0000256" key="5">
    <source>
        <dbReference type="SAM" id="MobiDB-lite"/>
    </source>
</evidence>
<evidence type="ECO:0000305" key="6"/>
<evidence type="ECO:0007829" key="7">
    <source>
        <dbReference type="PDB" id="5U2G"/>
    </source>
</evidence>